<evidence type="ECO:0000255" key="1">
    <source>
        <dbReference type="HAMAP-Rule" id="MF_01201"/>
    </source>
</evidence>
<evidence type="ECO:0000305" key="2"/>
<proteinExistence type="inferred from homology"/>
<sequence>MSLPFSQDERDLAAGGILTIDLAALRHNYSAIATRIAPTRTAAVVKADAYGLGASRVAPAFYEAGCRDFFVAHLGEAVALKPFLKPDATLYVLNGLQPGTEAACAREGILPVLNSLEQVENWAALATRLGKKLPALLQFDTGMSRLGLSAKEFDRLLENVTLLSRIDIKFAISHLANGDEPGNAVNARQLAKMTALLARLPKLPAALANSGGTFLGKTYYFDLARPGIALYGIDPERQHDFSDKVAHENKKPKHSILPVLTLSARVIQVRDVDKGATVGYGGTYVANGPMRIATIAVGYADGLFRSLSNKGAAFFGDTRLPIIGRVSMDSITLDVTSLPEGTLKLGSLVELIGPHQRLEDVARDCDTIPYEILTALGNRYARVYVYVNGGGTSTTA</sequence>
<keyword id="KW-0413">Isomerase</keyword>
<keyword id="KW-0663">Pyridoxal phosphate</keyword>
<organism>
    <name type="scientific">Brucella melitensis biotype 1 (strain ATCC 23456 / CCUG 17765 / NCTC 10094 / 16M)</name>
    <dbReference type="NCBI Taxonomy" id="224914"/>
    <lineage>
        <taxon>Bacteria</taxon>
        <taxon>Pseudomonadati</taxon>
        <taxon>Pseudomonadota</taxon>
        <taxon>Alphaproteobacteria</taxon>
        <taxon>Hyphomicrobiales</taxon>
        <taxon>Brucellaceae</taxon>
        <taxon>Brucella/Ochrobactrum group</taxon>
        <taxon>Brucella</taxon>
    </lineage>
</organism>
<gene>
    <name type="primary">alr</name>
    <name type="ordered locus">BMEII0374</name>
</gene>
<reference key="1">
    <citation type="journal article" date="2002" name="Proc. Natl. Acad. Sci. U.S.A.">
        <title>The genome sequence of the facultative intracellular pathogen Brucella melitensis.</title>
        <authorList>
            <person name="DelVecchio V.G."/>
            <person name="Kapatral V."/>
            <person name="Redkar R.J."/>
            <person name="Patra G."/>
            <person name="Mujer C."/>
            <person name="Los T."/>
            <person name="Ivanova N."/>
            <person name="Anderson I."/>
            <person name="Bhattacharyya A."/>
            <person name="Lykidis A."/>
            <person name="Reznik G."/>
            <person name="Jablonski L."/>
            <person name="Larsen N."/>
            <person name="D'Souza M."/>
            <person name="Bernal A."/>
            <person name="Mazur M."/>
            <person name="Goltsman E."/>
            <person name="Selkov E."/>
            <person name="Elzer P.H."/>
            <person name="Hagius S."/>
            <person name="O'Callaghan D."/>
            <person name="Letesson J.-J."/>
            <person name="Haselkorn R."/>
            <person name="Kyrpides N.C."/>
            <person name="Overbeek R."/>
        </authorList>
    </citation>
    <scope>NUCLEOTIDE SEQUENCE [LARGE SCALE GENOMIC DNA]</scope>
    <source>
        <strain>ATCC 23456 / CCUG 17765 / NCTC 10094 / 16M</strain>
    </source>
</reference>
<feature type="chain" id="PRO_0000114503" description="Alanine racemase">
    <location>
        <begin position="1"/>
        <end position="396"/>
    </location>
</feature>
<feature type="active site" description="Proton acceptor; specific for D-alanine" evidence="1">
    <location>
        <position position="46"/>
    </location>
</feature>
<feature type="active site" description="Proton acceptor; specific for L-alanine" evidence="1">
    <location>
        <position position="280"/>
    </location>
</feature>
<feature type="binding site" evidence="1">
    <location>
        <position position="145"/>
    </location>
    <ligand>
        <name>substrate</name>
    </ligand>
</feature>
<feature type="binding site" evidence="1">
    <location>
        <position position="328"/>
    </location>
    <ligand>
        <name>substrate</name>
    </ligand>
</feature>
<feature type="modified residue" description="N6-(pyridoxal phosphate)lysine" evidence="1">
    <location>
        <position position="46"/>
    </location>
</feature>
<name>ALR_BRUME</name>
<accession>Q8YD03</accession>
<protein>
    <recommendedName>
        <fullName evidence="1">Alanine racemase</fullName>
        <ecNumber evidence="1">5.1.1.1</ecNumber>
    </recommendedName>
</protein>
<dbReference type="EC" id="5.1.1.1" evidence="1"/>
<dbReference type="EMBL" id="AE008918">
    <property type="protein sequence ID" value="AAL53616.1"/>
    <property type="status" value="ALT_INIT"/>
    <property type="molecule type" value="Genomic_DNA"/>
</dbReference>
<dbReference type="PIR" id="AE3556">
    <property type="entry name" value="AE3556"/>
</dbReference>
<dbReference type="SMR" id="Q8YD03"/>
<dbReference type="KEGG" id="bme:BMEII0374"/>
<dbReference type="eggNOG" id="COG0787">
    <property type="taxonomic scope" value="Bacteria"/>
</dbReference>
<dbReference type="UniPathway" id="UPA00042">
    <property type="reaction ID" value="UER00497"/>
</dbReference>
<dbReference type="Proteomes" id="UP000000419">
    <property type="component" value="Chromosome II"/>
</dbReference>
<dbReference type="GO" id="GO:0005829">
    <property type="term" value="C:cytosol"/>
    <property type="evidence" value="ECO:0007669"/>
    <property type="project" value="TreeGrafter"/>
</dbReference>
<dbReference type="GO" id="GO:0008784">
    <property type="term" value="F:alanine racemase activity"/>
    <property type="evidence" value="ECO:0007669"/>
    <property type="project" value="UniProtKB-UniRule"/>
</dbReference>
<dbReference type="GO" id="GO:0030170">
    <property type="term" value="F:pyridoxal phosphate binding"/>
    <property type="evidence" value="ECO:0007669"/>
    <property type="project" value="UniProtKB-UniRule"/>
</dbReference>
<dbReference type="GO" id="GO:0030632">
    <property type="term" value="P:D-alanine biosynthetic process"/>
    <property type="evidence" value="ECO:0007669"/>
    <property type="project" value="UniProtKB-UniRule"/>
</dbReference>
<dbReference type="CDD" id="cd00430">
    <property type="entry name" value="PLPDE_III_AR"/>
    <property type="match status" value="1"/>
</dbReference>
<dbReference type="Gene3D" id="3.20.20.10">
    <property type="entry name" value="Alanine racemase"/>
    <property type="match status" value="1"/>
</dbReference>
<dbReference type="Gene3D" id="2.40.37.10">
    <property type="entry name" value="Lyase, Ornithine Decarboxylase, Chain A, domain 1"/>
    <property type="match status" value="1"/>
</dbReference>
<dbReference type="HAMAP" id="MF_01201">
    <property type="entry name" value="Ala_racemase"/>
    <property type="match status" value="1"/>
</dbReference>
<dbReference type="InterPro" id="IPR000821">
    <property type="entry name" value="Ala_racemase"/>
</dbReference>
<dbReference type="InterPro" id="IPR009006">
    <property type="entry name" value="Ala_racemase/Decarboxylase_C"/>
</dbReference>
<dbReference type="InterPro" id="IPR011079">
    <property type="entry name" value="Ala_racemase_C"/>
</dbReference>
<dbReference type="InterPro" id="IPR001608">
    <property type="entry name" value="Ala_racemase_N"/>
</dbReference>
<dbReference type="InterPro" id="IPR020622">
    <property type="entry name" value="Ala_racemase_pyridoxalP-BS"/>
</dbReference>
<dbReference type="InterPro" id="IPR029066">
    <property type="entry name" value="PLP-binding_barrel"/>
</dbReference>
<dbReference type="NCBIfam" id="TIGR00492">
    <property type="entry name" value="alr"/>
    <property type="match status" value="1"/>
</dbReference>
<dbReference type="PANTHER" id="PTHR30511">
    <property type="entry name" value="ALANINE RACEMASE"/>
    <property type="match status" value="1"/>
</dbReference>
<dbReference type="PANTHER" id="PTHR30511:SF0">
    <property type="entry name" value="ALANINE RACEMASE, CATABOLIC-RELATED"/>
    <property type="match status" value="1"/>
</dbReference>
<dbReference type="Pfam" id="PF00842">
    <property type="entry name" value="Ala_racemase_C"/>
    <property type="match status" value="1"/>
</dbReference>
<dbReference type="Pfam" id="PF01168">
    <property type="entry name" value="Ala_racemase_N"/>
    <property type="match status" value="1"/>
</dbReference>
<dbReference type="PRINTS" id="PR00992">
    <property type="entry name" value="ALARACEMASE"/>
</dbReference>
<dbReference type="SMART" id="SM01005">
    <property type="entry name" value="Ala_racemase_C"/>
    <property type="match status" value="1"/>
</dbReference>
<dbReference type="SUPFAM" id="SSF50621">
    <property type="entry name" value="Alanine racemase C-terminal domain-like"/>
    <property type="match status" value="1"/>
</dbReference>
<dbReference type="SUPFAM" id="SSF51419">
    <property type="entry name" value="PLP-binding barrel"/>
    <property type="match status" value="1"/>
</dbReference>
<dbReference type="PROSITE" id="PS00395">
    <property type="entry name" value="ALANINE_RACEMASE"/>
    <property type="match status" value="1"/>
</dbReference>
<comment type="function">
    <text evidence="1">Catalyzes the interconversion of L-alanine and D-alanine. May also act on other amino acids.</text>
</comment>
<comment type="catalytic activity">
    <reaction evidence="1">
        <text>L-alanine = D-alanine</text>
        <dbReference type="Rhea" id="RHEA:20249"/>
        <dbReference type="ChEBI" id="CHEBI:57416"/>
        <dbReference type="ChEBI" id="CHEBI:57972"/>
        <dbReference type="EC" id="5.1.1.1"/>
    </reaction>
</comment>
<comment type="cofactor">
    <cofactor evidence="1">
        <name>pyridoxal 5'-phosphate</name>
        <dbReference type="ChEBI" id="CHEBI:597326"/>
    </cofactor>
</comment>
<comment type="pathway">
    <text evidence="1">Amino-acid biosynthesis; D-alanine biosynthesis; D-alanine from L-alanine: step 1/1.</text>
</comment>
<comment type="similarity">
    <text evidence="1">Belongs to the alanine racemase family.</text>
</comment>
<comment type="sequence caution" evidence="2">
    <conflict type="erroneous initiation">
        <sequence resource="EMBL-CDS" id="AAL53616"/>
    </conflict>
</comment>